<reference key="1">
    <citation type="journal article" date="1998" name="DNA Res.">
        <title>Structural analysis of Arabidopsis thaliana chromosome 5. V. Sequence features of the regions of 1,381,565 bp covered by twenty one physically assigned P1 and TAC clones.</title>
        <authorList>
            <person name="Kaneko T."/>
            <person name="Kotani H."/>
            <person name="Nakamura Y."/>
            <person name="Sato S."/>
            <person name="Asamizu E."/>
            <person name="Miyajima N."/>
            <person name="Tabata S."/>
        </authorList>
    </citation>
    <scope>NUCLEOTIDE SEQUENCE [LARGE SCALE GENOMIC DNA]</scope>
    <source>
        <strain>cv. Columbia</strain>
    </source>
</reference>
<reference key="2">
    <citation type="journal article" date="2017" name="Plant J.">
        <title>Araport11: a complete reannotation of the Arabidopsis thaliana reference genome.</title>
        <authorList>
            <person name="Cheng C.Y."/>
            <person name="Krishnakumar V."/>
            <person name="Chan A.P."/>
            <person name="Thibaud-Nissen F."/>
            <person name="Schobel S."/>
            <person name="Town C.D."/>
        </authorList>
    </citation>
    <scope>GENOME REANNOTATION</scope>
    <source>
        <strain>cv. Columbia</strain>
    </source>
</reference>
<reference key="3">
    <citation type="journal article" date="2004" name="Plant Physiol.">
        <title>A large complement of the predicted Arabidopsis ARM repeat proteins are members of the U-box E3 ubiquitin ligase family.</title>
        <authorList>
            <person name="Mudgil Y."/>
            <person name="Shiu S.-H."/>
            <person name="Stone S.L."/>
            <person name="Salt J.N."/>
            <person name="Goring D.R."/>
        </authorList>
    </citation>
    <scope>GENE FAMILY ORGANIZATION</scope>
</reference>
<feature type="chain" id="PRO_0000322180" description="U-box domain-containing protein 40">
    <location>
        <begin position="1"/>
        <end position="550"/>
    </location>
</feature>
<feature type="domain" description="U-box">
    <location>
        <begin position="57"/>
        <end position="127"/>
    </location>
</feature>
<feature type="repeat" description="ARM 1">
    <location>
        <begin position="260"/>
        <end position="299"/>
    </location>
</feature>
<feature type="repeat" description="ARM 2">
    <location>
        <begin position="301"/>
        <end position="340"/>
    </location>
</feature>
<feature type="repeat" description="ARM 3">
    <location>
        <begin position="342"/>
        <end position="381"/>
    </location>
</feature>
<feature type="repeat" description="ARM 4">
    <location>
        <begin position="383"/>
        <end position="420"/>
    </location>
</feature>
<feature type="repeat" description="ARM 5">
    <location>
        <begin position="422"/>
        <end position="464"/>
    </location>
</feature>
<feature type="region of interest" description="Disordered" evidence="2">
    <location>
        <begin position="19"/>
        <end position="55"/>
    </location>
</feature>
<feature type="compositionally biased region" description="Basic and acidic residues" evidence="2">
    <location>
        <begin position="19"/>
        <end position="29"/>
    </location>
</feature>
<feature type="compositionally biased region" description="Low complexity" evidence="2">
    <location>
        <begin position="38"/>
        <end position="52"/>
    </location>
</feature>
<organism>
    <name type="scientific">Arabidopsis thaliana</name>
    <name type="common">Mouse-ear cress</name>
    <dbReference type="NCBI Taxonomy" id="3702"/>
    <lineage>
        <taxon>Eukaryota</taxon>
        <taxon>Viridiplantae</taxon>
        <taxon>Streptophyta</taxon>
        <taxon>Embryophyta</taxon>
        <taxon>Tracheophyta</taxon>
        <taxon>Spermatophyta</taxon>
        <taxon>Magnoliopsida</taxon>
        <taxon>eudicotyledons</taxon>
        <taxon>Gunneridae</taxon>
        <taxon>Pentapetalae</taxon>
        <taxon>rosids</taxon>
        <taxon>malvids</taxon>
        <taxon>Brassicales</taxon>
        <taxon>Brassicaceae</taxon>
        <taxon>Camelineae</taxon>
        <taxon>Arabidopsis</taxon>
    </lineage>
</organism>
<sequence length="550" mass="60218">MEIQRPVINLMVLHSQHDKSDNLSRRESLAGKSKWRTSLSRSSSSSSSNNNSPTKTEIPAEFLCPISGSLMADPIIVSSGHSYERACVIACKTLGFTPTPPPDFSTVIPNLALKSAIHSWCERRCFPPPKPLNSAAAEKLILALMEKKPQRRKVSVSEKELIQAIRDKPSVRLNHAATELDRRPNYFNSSSDESIASSSRTLQLTTKPSCFSSPSSGEIESLEPNLTPEEEALLTKLKSNRISEIEEALISIRRITRIDESSRISLCTTRVISALKSLIVSRYATVQVNVTAVLVNLSLEKSNKVKIVRSGIVPPLIDVLKCGSVEAQEHSAGVIFSLALEDENKTAIGVLGGLEPLLHLIRVGTELTRHDSALALYHLSLVQSNRGKLVKLGAVQMLLGMVSLGQMIGRVLLILCNMASCPVSRPALLDSGGVECMVGVLRRDREVNESTRESCVAVLYGLSHDGGLRFKGLAMAANAVEELVKVERSGRERAKQKARRVLEVLRAKIEDDDLVENEEIDWEELLNSGDVSRSRCRLGGEKSCVNSAEF</sequence>
<accession>Q9FL17</accession>
<name>PUB40_ARATH</name>
<dbReference type="EC" id="2.3.2.27"/>
<dbReference type="EMBL" id="AB010699">
    <property type="protein sequence ID" value="BAB10895.1"/>
    <property type="status" value="ALT_INIT"/>
    <property type="molecule type" value="Genomic_DNA"/>
</dbReference>
<dbReference type="EMBL" id="CP002688">
    <property type="protein sequence ID" value="AED94512.1"/>
    <property type="molecule type" value="Genomic_DNA"/>
</dbReference>
<dbReference type="RefSeq" id="NP_198830.1">
    <property type="nucleotide sequence ID" value="NM_123377.2"/>
</dbReference>
<dbReference type="SMR" id="Q9FL17"/>
<dbReference type="FunCoup" id="Q9FL17">
    <property type="interactions" value="80"/>
</dbReference>
<dbReference type="STRING" id="3702.Q9FL17"/>
<dbReference type="GlyGen" id="Q9FL17">
    <property type="glycosylation" value="1 site"/>
</dbReference>
<dbReference type="iPTMnet" id="Q9FL17"/>
<dbReference type="PaxDb" id="3702-AT5G40140.1"/>
<dbReference type="ProteomicsDB" id="226247"/>
<dbReference type="EnsemblPlants" id="AT5G40140.1">
    <property type="protein sequence ID" value="AT5G40140.1"/>
    <property type="gene ID" value="AT5G40140"/>
</dbReference>
<dbReference type="GeneID" id="834011"/>
<dbReference type="Gramene" id="AT5G40140.1">
    <property type="protein sequence ID" value="AT5G40140.1"/>
    <property type="gene ID" value="AT5G40140"/>
</dbReference>
<dbReference type="KEGG" id="ath:AT5G40140"/>
<dbReference type="Araport" id="AT5G40140"/>
<dbReference type="TAIR" id="AT5G40140">
    <property type="gene designation" value="PUB40"/>
</dbReference>
<dbReference type="eggNOG" id="ENOG502QPJU">
    <property type="taxonomic scope" value="Eukaryota"/>
</dbReference>
<dbReference type="HOGENOM" id="CLU_006348_7_0_1"/>
<dbReference type="InParanoid" id="Q9FL17"/>
<dbReference type="OMA" id="TSEMECR"/>
<dbReference type="UniPathway" id="UPA00143"/>
<dbReference type="PRO" id="PR:Q9FL17"/>
<dbReference type="Proteomes" id="UP000006548">
    <property type="component" value="Chromosome 5"/>
</dbReference>
<dbReference type="ExpressionAtlas" id="Q9FL17">
    <property type="expression patterns" value="baseline and differential"/>
</dbReference>
<dbReference type="GO" id="GO:0061630">
    <property type="term" value="F:ubiquitin protein ligase activity"/>
    <property type="evidence" value="ECO:0000314"/>
    <property type="project" value="TAIR"/>
</dbReference>
<dbReference type="GO" id="GO:0016567">
    <property type="term" value="P:protein ubiquitination"/>
    <property type="evidence" value="ECO:0007669"/>
    <property type="project" value="UniProtKB-UniPathway"/>
</dbReference>
<dbReference type="FunFam" id="1.25.10.10:FF:000578">
    <property type="entry name" value="RING-type E3 ubiquitin transferase"/>
    <property type="match status" value="1"/>
</dbReference>
<dbReference type="Gene3D" id="1.25.10.10">
    <property type="entry name" value="Leucine-rich Repeat Variant"/>
    <property type="match status" value="1"/>
</dbReference>
<dbReference type="Gene3D" id="3.30.40.10">
    <property type="entry name" value="Zinc/RING finger domain, C3HC4 (zinc finger)"/>
    <property type="match status" value="1"/>
</dbReference>
<dbReference type="InterPro" id="IPR011989">
    <property type="entry name" value="ARM-like"/>
</dbReference>
<dbReference type="InterPro" id="IPR016024">
    <property type="entry name" value="ARM-type_fold"/>
</dbReference>
<dbReference type="InterPro" id="IPR000225">
    <property type="entry name" value="Armadillo"/>
</dbReference>
<dbReference type="InterPro" id="IPR003613">
    <property type="entry name" value="Ubox_domain"/>
</dbReference>
<dbReference type="InterPro" id="IPR013083">
    <property type="entry name" value="Znf_RING/FYVE/PHD"/>
</dbReference>
<dbReference type="PANTHER" id="PTHR23315">
    <property type="entry name" value="U BOX DOMAIN-CONTAINING"/>
    <property type="match status" value="1"/>
</dbReference>
<dbReference type="PANTHER" id="PTHR23315:SF339">
    <property type="entry name" value="U-BOX DOMAIN-CONTAINING PROTEIN 40"/>
    <property type="match status" value="1"/>
</dbReference>
<dbReference type="Pfam" id="PF00514">
    <property type="entry name" value="Arm"/>
    <property type="match status" value="1"/>
</dbReference>
<dbReference type="Pfam" id="PF04564">
    <property type="entry name" value="U-box"/>
    <property type="match status" value="1"/>
</dbReference>
<dbReference type="SMART" id="SM00185">
    <property type="entry name" value="ARM"/>
    <property type="match status" value="4"/>
</dbReference>
<dbReference type="SMART" id="SM00504">
    <property type="entry name" value="Ubox"/>
    <property type="match status" value="1"/>
</dbReference>
<dbReference type="SUPFAM" id="SSF48371">
    <property type="entry name" value="ARM repeat"/>
    <property type="match status" value="1"/>
</dbReference>
<dbReference type="SUPFAM" id="SSF57850">
    <property type="entry name" value="RING/U-box"/>
    <property type="match status" value="1"/>
</dbReference>
<dbReference type="PROSITE" id="PS50176">
    <property type="entry name" value="ARM_REPEAT"/>
    <property type="match status" value="1"/>
</dbReference>
<dbReference type="PROSITE" id="PS51698">
    <property type="entry name" value="U_BOX"/>
    <property type="match status" value="1"/>
</dbReference>
<evidence type="ECO:0000250" key="1"/>
<evidence type="ECO:0000256" key="2">
    <source>
        <dbReference type="SAM" id="MobiDB-lite"/>
    </source>
</evidence>
<evidence type="ECO:0000305" key="3"/>
<proteinExistence type="evidence at transcript level"/>
<gene>
    <name type="primary">PUB40</name>
    <name type="ordered locus">At5g40140</name>
    <name type="ORF">MSN9.4</name>
</gene>
<keyword id="KW-1185">Reference proteome</keyword>
<keyword id="KW-0677">Repeat</keyword>
<keyword id="KW-0808">Transferase</keyword>
<keyword id="KW-0833">Ubl conjugation pathway</keyword>
<protein>
    <recommendedName>
        <fullName>U-box domain-containing protein 40</fullName>
        <ecNumber>2.3.2.27</ecNumber>
    </recommendedName>
    <alternativeName>
        <fullName>Plant U-box protein 40</fullName>
    </alternativeName>
    <alternativeName>
        <fullName evidence="3">RING-type E3 ubiquitin transferase PUB40</fullName>
    </alternativeName>
</protein>
<comment type="function">
    <text evidence="1">Functions as an E3 ubiquitin ligase.</text>
</comment>
<comment type="catalytic activity">
    <reaction>
        <text>S-ubiquitinyl-[E2 ubiquitin-conjugating enzyme]-L-cysteine + [acceptor protein]-L-lysine = [E2 ubiquitin-conjugating enzyme]-L-cysteine + N(6)-ubiquitinyl-[acceptor protein]-L-lysine.</text>
        <dbReference type="EC" id="2.3.2.27"/>
    </reaction>
</comment>
<comment type="pathway">
    <text>Protein modification; protein ubiquitination.</text>
</comment>
<comment type="sequence caution" evidence="3">
    <conflict type="erroneous initiation">
        <sequence resource="EMBL-CDS" id="BAB10895"/>
    </conflict>
    <text>Truncated N-terminus.</text>
</comment>